<accession>Q9HVY2</accession>
<keyword id="KW-0002">3D-structure</keyword>
<keyword id="KW-1185">Reference proteome</keyword>
<keyword id="KW-0687">Ribonucleoprotein</keyword>
<keyword id="KW-0689">Ribosomal protein</keyword>
<dbReference type="EMBL" id="AE004091">
    <property type="protein sequence ID" value="AAG07821.1"/>
    <property type="molecule type" value="Genomic_DNA"/>
</dbReference>
<dbReference type="PIR" id="A83093">
    <property type="entry name" value="A83093"/>
</dbReference>
<dbReference type="RefSeq" id="NP_253123.1">
    <property type="nucleotide sequence ID" value="NC_002516.2"/>
</dbReference>
<dbReference type="RefSeq" id="WP_003094164.1">
    <property type="nucleotide sequence ID" value="NZ_QZGE01000004.1"/>
</dbReference>
<dbReference type="PDB" id="7UNR">
    <property type="method" value="EM"/>
    <property type="resolution" value="2.90 A"/>
    <property type="chains" value="L=1-142"/>
</dbReference>
<dbReference type="PDB" id="7UNU">
    <property type="method" value="EM"/>
    <property type="resolution" value="2.90 A"/>
    <property type="chains" value="L=1-142"/>
</dbReference>
<dbReference type="PDB" id="7UNV">
    <property type="method" value="EM"/>
    <property type="resolution" value="2.70 A"/>
    <property type="chains" value="L=1-142"/>
</dbReference>
<dbReference type="PDB" id="7UNW">
    <property type="method" value="EM"/>
    <property type="resolution" value="2.60 A"/>
    <property type="chains" value="L=1-142"/>
</dbReference>
<dbReference type="PDB" id="8CD1">
    <property type="method" value="EM"/>
    <property type="resolution" value="3.00 A"/>
    <property type="chains" value="J=1-142"/>
</dbReference>
<dbReference type="PDB" id="8RWG">
    <property type="method" value="EM"/>
    <property type="resolution" value="2.46 A"/>
    <property type="chains" value="J=1-142"/>
</dbReference>
<dbReference type="PDBsum" id="7UNR"/>
<dbReference type="PDBsum" id="7UNU"/>
<dbReference type="PDBsum" id="7UNV"/>
<dbReference type="PDBsum" id="7UNW"/>
<dbReference type="PDBsum" id="8CD1"/>
<dbReference type="PDBsum" id="8RWG"/>
<dbReference type="EMDB" id="EMD-16566"/>
<dbReference type="EMDB" id="EMD-19547"/>
<dbReference type="EMDB" id="EMD-26630"/>
<dbReference type="EMDB" id="EMD-26633"/>
<dbReference type="EMDB" id="EMD-26634"/>
<dbReference type="EMDB" id="EMD-26635"/>
<dbReference type="SMR" id="Q9HVY2"/>
<dbReference type="FunCoup" id="Q9HVY2">
    <property type="interactions" value="933"/>
</dbReference>
<dbReference type="STRING" id="208964.PA4433"/>
<dbReference type="PaxDb" id="208964-PA4433"/>
<dbReference type="DNASU" id="881275"/>
<dbReference type="GeneID" id="881275"/>
<dbReference type="KEGG" id="pae:PA4433"/>
<dbReference type="PATRIC" id="fig|208964.12.peg.4642"/>
<dbReference type="PseudoCAP" id="PA4433"/>
<dbReference type="HOGENOM" id="CLU_082184_2_2_6"/>
<dbReference type="InParanoid" id="Q9HVY2"/>
<dbReference type="OrthoDB" id="9801330at2"/>
<dbReference type="PhylomeDB" id="Q9HVY2"/>
<dbReference type="BioCyc" id="PAER208964:G1FZ6-4521-MONOMER"/>
<dbReference type="PRO" id="PR:Q9HVY2"/>
<dbReference type="Proteomes" id="UP000002438">
    <property type="component" value="Chromosome"/>
</dbReference>
<dbReference type="GO" id="GO:0022625">
    <property type="term" value="C:cytosolic large ribosomal subunit"/>
    <property type="evidence" value="ECO:0000318"/>
    <property type="project" value="GO_Central"/>
</dbReference>
<dbReference type="GO" id="GO:0005840">
    <property type="term" value="C:ribosome"/>
    <property type="evidence" value="ECO:0000318"/>
    <property type="project" value="GO_Central"/>
</dbReference>
<dbReference type="GO" id="GO:0003729">
    <property type="term" value="F:mRNA binding"/>
    <property type="evidence" value="ECO:0000318"/>
    <property type="project" value="GO_Central"/>
</dbReference>
<dbReference type="GO" id="GO:0003735">
    <property type="term" value="F:structural constituent of ribosome"/>
    <property type="evidence" value="ECO:0000318"/>
    <property type="project" value="GO_Central"/>
</dbReference>
<dbReference type="GO" id="GO:0017148">
    <property type="term" value="P:negative regulation of translation"/>
    <property type="evidence" value="ECO:0000318"/>
    <property type="project" value="GO_Central"/>
</dbReference>
<dbReference type="GO" id="GO:0006412">
    <property type="term" value="P:translation"/>
    <property type="evidence" value="ECO:0007669"/>
    <property type="project" value="UniProtKB-UniRule"/>
</dbReference>
<dbReference type="CDD" id="cd00392">
    <property type="entry name" value="Ribosomal_L13"/>
    <property type="match status" value="1"/>
</dbReference>
<dbReference type="FunFam" id="3.90.1180.10:FF:000001">
    <property type="entry name" value="50S ribosomal protein L13"/>
    <property type="match status" value="1"/>
</dbReference>
<dbReference type="Gene3D" id="3.90.1180.10">
    <property type="entry name" value="Ribosomal protein L13"/>
    <property type="match status" value="1"/>
</dbReference>
<dbReference type="HAMAP" id="MF_01366">
    <property type="entry name" value="Ribosomal_uL13"/>
    <property type="match status" value="1"/>
</dbReference>
<dbReference type="InterPro" id="IPR005822">
    <property type="entry name" value="Ribosomal_uL13"/>
</dbReference>
<dbReference type="InterPro" id="IPR005823">
    <property type="entry name" value="Ribosomal_uL13_bac-type"/>
</dbReference>
<dbReference type="InterPro" id="IPR023563">
    <property type="entry name" value="Ribosomal_uL13_CS"/>
</dbReference>
<dbReference type="InterPro" id="IPR036899">
    <property type="entry name" value="Ribosomal_uL13_sf"/>
</dbReference>
<dbReference type="NCBIfam" id="TIGR01066">
    <property type="entry name" value="rplM_bact"/>
    <property type="match status" value="1"/>
</dbReference>
<dbReference type="PANTHER" id="PTHR11545:SF2">
    <property type="entry name" value="LARGE RIBOSOMAL SUBUNIT PROTEIN UL13M"/>
    <property type="match status" value="1"/>
</dbReference>
<dbReference type="PANTHER" id="PTHR11545">
    <property type="entry name" value="RIBOSOMAL PROTEIN L13"/>
    <property type="match status" value="1"/>
</dbReference>
<dbReference type="Pfam" id="PF00572">
    <property type="entry name" value="Ribosomal_L13"/>
    <property type="match status" value="1"/>
</dbReference>
<dbReference type="PIRSF" id="PIRSF002181">
    <property type="entry name" value="Ribosomal_L13"/>
    <property type="match status" value="1"/>
</dbReference>
<dbReference type="SUPFAM" id="SSF52161">
    <property type="entry name" value="Ribosomal protein L13"/>
    <property type="match status" value="1"/>
</dbReference>
<dbReference type="PROSITE" id="PS00783">
    <property type="entry name" value="RIBOSOMAL_L13"/>
    <property type="match status" value="1"/>
</dbReference>
<name>RL13_PSEAE</name>
<feature type="chain" id="PRO_0000261769" description="Large ribosomal subunit protein uL13">
    <location>
        <begin position="1"/>
        <end position="142"/>
    </location>
</feature>
<comment type="function">
    <text evidence="1">This protein is one of the early assembly proteins of the 50S ribosomal subunit, although it is not seen to bind rRNA by itself. It is important during the early stages of 50S assembly.</text>
</comment>
<comment type="subunit">
    <text evidence="1">Part of the 50S ribosomal subunit.</text>
</comment>
<comment type="similarity">
    <text evidence="1">Belongs to the universal ribosomal protein uL13 family.</text>
</comment>
<organism>
    <name type="scientific">Pseudomonas aeruginosa (strain ATCC 15692 / DSM 22644 / CIP 104116 / JCM 14847 / LMG 12228 / 1C / PRS 101 / PAO1)</name>
    <dbReference type="NCBI Taxonomy" id="208964"/>
    <lineage>
        <taxon>Bacteria</taxon>
        <taxon>Pseudomonadati</taxon>
        <taxon>Pseudomonadota</taxon>
        <taxon>Gammaproteobacteria</taxon>
        <taxon>Pseudomonadales</taxon>
        <taxon>Pseudomonadaceae</taxon>
        <taxon>Pseudomonas</taxon>
    </lineage>
</organism>
<evidence type="ECO:0000255" key="1">
    <source>
        <dbReference type="HAMAP-Rule" id="MF_01366"/>
    </source>
</evidence>
<evidence type="ECO:0000305" key="2"/>
<reference key="1">
    <citation type="journal article" date="2000" name="Nature">
        <title>Complete genome sequence of Pseudomonas aeruginosa PAO1, an opportunistic pathogen.</title>
        <authorList>
            <person name="Stover C.K."/>
            <person name="Pham X.-Q.T."/>
            <person name="Erwin A.L."/>
            <person name="Mizoguchi S.D."/>
            <person name="Warrener P."/>
            <person name="Hickey M.J."/>
            <person name="Brinkman F.S.L."/>
            <person name="Hufnagle W.O."/>
            <person name="Kowalik D.J."/>
            <person name="Lagrou M."/>
            <person name="Garber R.L."/>
            <person name="Goltry L."/>
            <person name="Tolentino E."/>
            <person name="Westbrock-Wadman S."/>
            <person name="Yuan Y."/>
            <person name="Brody L.L."/>
            <person name="Coulter S.N."/>
            <person name="Folger K.R."/>
            <person name="Kas A."/>
            <person name="Larbig K."/>
            <person name="Lim R.M."/>
            <person name="Smith K.A."/>
            <person name="Spencer D.H."/>
            <person name="Wong G.K.-S."/>
            <person name="Wu Z."/>
            <person name="Paulsen I.T."/>
            <person name="Reizer J."/>
            <person name="Saier M.H. Jr."/>
            <person name="Hancock R.E.W."/>
            <person name="Lory S."/>
            <person name="Olson M.V."/>
        </authorList>
    </citation>
    <scope>NUCLEOTIDE SEQUENCE [LARGE SCALE GENOMIC DNA]</scope>
    <source>
        <strain>ATCC 15692 / DSM 22644 / CIP 104116 / JCM 14847 / LMG 12228 / 1C / PRS 101 / PAO1</strain>
    </source>
</reference>
<protein>
    <recommendedName>
        <fullName evidence="1">Large ribosomal subunit protein uL13</fullName>
    </recommendedName>
    <alternativeName>
        <fullName evidence="2">50S ribosomal protein L13</fullName>
    </alternativeName>
</protein>
<gene>
    <name evidence="1" type="primary">rplM</name>
    <name type="ordered locus">PA4433</name>
</gene>
<proteinExistence type="evidence at protein level"/>
<sequence>MKTYTAKPETVQRDWFVVDAAGQTLGRLATEIARRLRGKHKPEYTPHVDTGDYIVVINAEQVRVTGAKTTDKMYYHHSGFPGGIKSINFEKLIAKAPERVIETAVKGMLPKNPLGRDMYRKLKVYKGASHPHTAQQPQELKI</sequence>